<protein>
    <recommendedName>
        <fullName>DNA ligase 4</fullName>
        <ecNumber evidence="3">6.5.1.1</ecNumber>
    </recommendedName>
    <alternativeName>
        <fullName>DNA ligase IV</fullName>
    </alternativeName>
    <alternativeName>
        <fullName>Polydeoxyribonucleotide synthase [ATP] 4</fullName>
    </alternativeName>
</protein>
<name>DNLI4_YARLI</name>
<organism>
    <name type="scientific">Yarrowia lipolytica (strain CLIB 122 / E 150)</name>
    <name type="common">Yeast</name>
    <name type="synonym">Candida lipolytica</name>
    <dbReference type="NCBI Taxonomy" id="284591"/>
    <lineage>
        <taxon>Eukaryota</taxon>
        <taxon>Fungi</taxon>
        <taxon>Dikarya</taxon>
        <taxon>Ascomycota</taxon>
        <taxon>Saccharomycotina</taxon>
        <taxon>Dipodascomycetes</taxon>
        <taxon>Dipodascales</taxon>
        <taxon>Dipodascales incertae sedis</taxon>
        <taxon>Yarrowia</taxon>
    </lineage>
</organism>
<dbReference type="EC" id="6.5.1.1" evidence="3"/>
<dbReference type="EMBL" id="CR382130">
    <property type="protein sequence ID" value="CAG81303.1"/>
    <property type="molecule type" value="Genomic_DNA"/>
</dbReference>
<dbReference type="RefSeq" id="XP_503109.1">
    <property type="nucleotide sequence ID" value="XM_503109.1"/>
</dbReference>
<dbReference type="SMR" id="Q6C8A3"/>
<dbReference type="FunCoup" id="Q6C8A3">
    <property type="interactions" value="579"/>
</dbReference>
<dbReference type="STRING" id="284591.Q6C8A3"/>
<dbReference type="EnsemblFungi" id="CAG81303">
    <property type="protein sequence ID" value="CAG81303"/>
    <property type="gene ID" value="YALI0_D21384g"/>
</dbReference>
<dbReference type="KEGG" id="yli:2911076"/>
<dbReference type="VEuPathDB" id="FungiDB:YALI0_D21384g"/>
<dbReference type="HOGENOM" id="CLU_004844_1_1_1"/>
<dbReference type="InParanoid" id="Q6C8A3"/>
<dbReference type="OMA" id="EGIMIKH"/>
<dbReference type="OrthoDB" id="21139at4891"/>
<dbReference type="Proteomes" id="UP000001300">
    <property type="component" value="Chromosome D"/>
</dbReference>
<dbReference type="GO" id="GO:0000785">
    <property type="term" value="C:chromatin"/>
    <property type="evidence" value="ECO:0007669"/>
    <property type="project" value="EnsemblFungi"/>
</dbReference>
<dbReference type="GO" id="GO:0032807">
    <property type="term" value="C:DNA ligase IV complex"/>
    <property type="evidence" value="ECO:0000318"/>
    <property type="project" value="GO_Central"/>
</dbReference>
<dbReference type="GO" id="GO:0005730">
    <property type="term" value="C:nucleolus"/>
    <property type="evidence" value="ECO:0007669"/>
    <property type="project" value="EnsemblFungi"/>
</dbReference>
<dbReference type="GO" id="GO:0005524">
    <property type="term" value="F:ATP binding"/>
    <property type="evidence" value="ECO:0000318"/>
    <property type="project" value="GO_Central"/>
</dbReference>
<dbReference type="GO" id="GO:0003677">
    <property type="term" value="F:DNA binding"/>
    <property type="evidence" value="ECO:0000318"/>
    <property type="project" value="GO_Central"/>
</dbReference>
<dbReference type="GO" id="GO:0003910">
    <property type="term" value="F:DNA ligase (ATP) activity"/>
    <property type="evidence" value="ECO:0000250"/>
    <property type="project" value="UniProtKB"/>
</dbReference>
<dbReference type="GO" id="GO:0046872">
    <property type="term" value="F:metal ion binding"/>
    <property type="evidence" value="ECO:0007669"/>
    <property type="project" value="UniProtKB-KW"/>
</dbReference>
<dbReference type="GO" id="GO:0071897">
    <property type="term" value="P:DNA biosynthetic process"/>
    <property type="evidence" value="ECO:0007669"/>
    <property type="project" value="InterPro"/>
</dbReference>
<dbReference type="GO" id="GO:0006310">
    <property type="term" value="P:DNA recombination"/>
    <property type="evidence" value="ECO:0007669"/>
    <property type="project" value="UniProtKB-KW"/>
</dbReference>
<dbReference type="GO" id="GO:0097680">
    <property type="term" value="P:double-strand break repair via classical nonhomologous end joining"/>
    <property type="evidence" value="ECO:0000250"/>
    <property type="project" value="UniProtKB"/>
</dbReference>
<dbReference type="GO" id="GO:0006303">
    <property type="term" value="P:double-strand break repair via nonhomologous end joining"/>
    <property type="evidence" value="ECO:0000318"/>
    <property type="project" value="GO_Central"/>
</dbReference>
<dbReference type="GO" id="GO:0006297">
    <property type="term" value="P:nucleotide-excision repair, DNA gap filling"/>
    <property type="evidence" value="ECO:0000318"/>
    <property type="project" value="GO_Central"/>
</dbReference>
<dbReference type="CDD" id="cd07903">
    <property type="entry name" value="Adenylation_DNA_ligase_IV"/>
    <property type="match status" value="1"/>
</dbReference>
<dbReference type="CDD" id="cd17722">
    <property type="entry name" value="BRCT_DNA_ligase_IV_rpt1"/>
    <property type="match status" value="1"/>
</dbReference>
<dbReference type="CDD" id="cd07968">
    <property type="entry name" value="OBF_DNA_ligase_IV"/>
    <property type="match status" value="1"/>
</dbReference>
<dbReference type="FunFam" id="1.10.3260.10:FF:000008">
    <property type="entry name" value="DNA ligase 4"/>
    <property type="match status" value="1"/>
</dbReference>
<dbReference type="Gene3D" id="3.40.50.10190">
    <property type="entry name" value="BRCT domain"/>
    <property type="match status" value="2"/>
</dbReference>
<dbReference type="Gene3D" id="1.10.3260.10">
    <property type="entry name" value="DNA ligase, ATP-dependent, N-terminal domain"/>
    <property type="match status" value="1"/>
</dbReference>
<dbReference type="Gene3D" id="3.30.470.30">
    <property type="entry name" value="DNA ligase/mRNA capping enzyme"/>
    <property type="match status" value="1"/>
</dbReference>
<dbReference type="Gene3D" id="2.40.50.140">
    <property type="entry name" value="Nucleic acid-binding proteins"/>
    <property type="match status" value="1"/>
</dbReference>
<dbReference type="InterPro" id="IPR044125">
    <property type="entry name" value="Adenylation_DNA_ligase_IV"/>
</dbReference>
<dbReference type="InterPro" id="IPR001357">
    <property type="entry name" value="BRCT_dom"/>
</dbReference>
<dbReference type="InterPro" id="IPR036420">
    <property type="entry name" value="BRCT_dom_sf"/>
</dbReference>
<dbReference type="InterPro" id="IPR000977">
    <property type="entry name" value="DNA_ligase_ATP-dep"/>
</dbReference>
<dbReference type="InterPro" id="IPR012309">
    <property type="entry name" value="DNA_ligase_ATP-dep_C"/>
</dbReference>
<dbReference type="InterPro" id="IPR012310">
    <property type="entry name" value="DNA_ligase_ATP-dep_cent"/>
</dbReference>
<dbReference type="InterPro" id="IPR012308">
    <property type="entry name" value="DNA_ligase_ATP-dep_N"/>
</dbReference>
<dbReference type="InterPro" id="IPR036599">
    <property type="entry name" value="DNA_ligase_N_sf"/>
</dbReference>
<dbReference type="InterPro" id="IPR029710">
    <property type="entry name" value="LIG4"/>
</dbReference>
<dbReference type="InterPro" id="IPR012340">
    <property type="entry name" value="NA-bd_OB-fold"/>
</dbReference>
<dbReference type="NCBIfam" id="TIGR00574">
    <property type="entry name" value="dnl1"/>
    <property type="match status" value="1"/>
</dbReference>
<dbReference type="PANTHER" id="PTHR45997">
    <property type="entry name" value="DNA LIGASE 4"/>
    <property type="match status" value="1"/>
</dbReference>
<dbReference type="PANTHER" id="PTHR45997:SF1">
    <property type="entry name" value="DNA LIGASE 4"/>
    <property type="match status" value="1"/>
</dbReference>
<dbReference type="Pfam" id="PF16589">
    <property type="entry name" value="BRCT_2"/>
    <property type="match status" value="1"/>
</dbReference>
<dbReference type="Pfam" id="PF04679">
    <property type="entry name" value="DNA_ligase_A_C"/>
    <property type="match status" value="1"/>
</dbReference>
<dbReference type="Pfam" id="PF01068">
    <property type="entry name" value="DNA_ligase_A_M"/>
    <property type="match status" value="1"/>
</dbReference>
<dbReference type="Pfam" id="PF04675">
    <property type="entry name" value="DNA_ligase_A_N"/>
    <property type="match status" value="1"/>
</dbReference>
<dbReference type="SMART" id="SM00292">
    <property type="entry name" value="BRCT"/>
    <property type="match status" value="2"/>
</dbReference>
<dbReference type="SUPFAM" id="SSF52113">
    <property type="entry name" value="BRCT domain"/>
    <property type="match status" value="1"/>
</dbReference>
<dbReference type="SUPFAM" id="SSF56091">
    <property type="entry name" value="DNA ligase/mRNA capping enzyme, catalytic domain"/>
    <property type="match status" value="1"/>
</dbReference>
<dbReference type="SUPFAM" id="SSF50249">
    <property type="entry name" value="Nucleic acid-binding proteins"/>
    <property type="match status" value="1"/>
</dbReference>
<dbReference type="PROSITE" id="PS50172">
    <property type="entry name" value="BRCT"/>
    <property type="match status" value="2"/>
</dbReference>
<dbReference type="PROSITE" id="PS50160">
    <property type="entry name" value="DNA_LIGASE_A3"/>
    <property type="match status" value="1"/>
</dbReference>
<proteinExistence type="inferred from homology"/>
<reference key="1">
    <citation type="journal article" date="2004" name="Nature">
        <title>Genome evolution in yeasts.</title>
        <authorList>
            <person name="Dujon B."/>
            <person name="Sherman D."/>
            <person name="Fischer G."/>
            <person name="Durrens P."/>
            <person name="Casaregola S."/>
            <person name="Lafontaine I."/>
            <person name="de Montigny J."/>
            <person name="Marck C."/>
            <person name="Neuveglise C."/>
            <person name="Talla E."/>
            <person name="Goffard N."/>
            <person name="Frangeul L."/>
            <person name="Aigle M."/>
            <person name="Anthouard V."/>
            <person name="Babour A."/>
            <person name="Barbe V."/>
            <person name="Barnay S."/>
            <person name="Blanchin S."/>
            <person name="Beckerich J.-M."/>
            <person name="Beyne E."/>
            <person name="Bleykasten C."/>
            <person name="Boisrame A."/>
            <person name="Boyer J."/>
            <person name="Cattolico L."/>
            <person name="Confanioleri F."/>
            <person name="de Daruvar A."/>
            <person name="Despons L."/>
            <person name="Fabre E."/>
            <person name="Fairhead C."/>
            <person name="Ferry-Dumazet H."/>
            <person name="Groppi A."/>
            <person name="Hantraye F."/>
            <person name="Hennequin C."/>
            <person name="Jauniaux N."/>
            <person name="Joyet P."/>
            <person name="Kachouri R."/>
            <person name="Kerrest A."/>
            <person name="Koszul R."/>
            <person name="Lemaire M."/>
            <person name="Lesur I."/>
            <person name="Ma L."/>
            <person name="Muller H."/>
            <person name="Nicaud J.-M."/>
            <person name="Nikolski M."/>
            <person name="Oztas S."/>
            <person name="Ozier-Kalogeropoulos O."/>
            <person name="Pellenz S."/>
            <person name="Potier S."/>
            <person name="Richard G.-F."/>
            <person name="Straub M.-L."/>
            <person name="Suleau A."/>
            <person name="Swennen D."/>
            <person name="Tekaia F."/>
            <person name="Wesolowski-Louvel M."/>
            <person name="Westhof E."/>
            <person name="Wirth B."/>
            <person name="Zeniou-Meyer M."/>
            <person name="Zivanovic Y."/>
            <person name="Bolotin-Fukuhara M."/>
            <person name="Thierry A."/>
            <person name="Bouchier C."/>
            <person name="Caudron B."/>
            <person name="Scarpelli C."/>
            <person name="Gaillardin C."/>
            <person name="Weissenbach J."/>
            <person name="Wincker P."/>
            <person name="Souciet J.-L."/>
        </authorList>
    </citation>
    <scope>NUCLEOTIDE SEQUENCE [LARGE SCALE GENOMIC DNA]</scope>
    <source>
        <strain>CLIB 122 / E 150</strain>
    </source>
</reference>
<keyword id="KW-0067">ATP-binding</keyword>
<keyword id="KW-0227">DNA damage</keyword>
<keyword id="KW-0233">DNA recombination</keyword>
<keyword id="KW-0234">DNA repair</keyword>
<keyword id="KW-0436">Ligase</keyword>
<keyword id="KW-0460">Magnesium</keyword>
<keyword id="KW-0479">Metal-binding</keyword>
<keyword id="KW-0547">Nucleotide-binding</keyword>
<keyword id="KW-0539">Nucleus</keyword>
<keyword id="KW-1185">Reference proteome</keyword>
<keyword id="KW-0677">Repeat</keyword>
<gene>
    <name type="primary">LIG4</name>
    <name type="ordered locus">YALI0D21384g</name>
</gene>
<evidence type="ECO:0000250" key="1"/>
<evidence type="ECO:0000250" key="2">
    <source>
        <dbReference type="UniProtKB" id="P49917"/>
    </source>
</evidence>
<evidence type="ECO:0000250" key="3">
    <source>
        <dbReference type="UniProtKB" id="Q08387"/>
    </source>
</evidence>
<evidence type="ECO:0000255" key="4"/>
<evidence type="ECO:0000255" key="5">
    <source>
        <dbReference type="PROSITE-ProRule" id="PRU00033"/>
    </source>
</evidence>
<evidence type="ECO:0000256" key="6">
    <source>
        <dbReference type="SAM" id="MobiDB-lite"/>
    </source>
</evidence>
<evidence type="ECO:0000305" key="7"/>
<comment type="function">
    <text evidence="3">DNA ligase involved in DNA non-homologous end joining (NHEJ); required for double-strand break (DSB) repair.</text>
</comment>
<comment type="catalytic activity">
    <reaction evidence="3">
        <text>ATP + (deoxyribonucleotide)n-3'-hydroxyl + 5'-phospho-(deoxyribonucleotide)m = (deoxyribonucleotide)n+m + AMP + diphosphate.</text>
        <dbReference type="EC" id="6.5.1.1"/>
    </reaction>
</comment>
<comment type="cofactor">
    <cofactor evidence="2">
        <name>Mg(2+)</name>
        <dbReference type="ChEBI" id="CHEBI:18420"/>
    </cofactor>
</comment>
<comment type="subcellular location">
    <subcellularLocation>
        <location evidence="3">Nucleus</location>
    </subcellularLocation>
</comment>
<comment type="similarity">
    <text evidence="7">Belongs to the ATP-dependent DNA ligase family.</text>
</comment>
<accession>Q6C8A3</accession>
<feature type="chain" id="PRO_0000278386" description="DNA ligase 4">
    <location>
        <begin position="1"/>
        <end position="956"/>
    </location>
</feature>
<feature type="domain" description="BRCT 1" evidence="5">
    <location>
        <begin position="700"/>
        <end position="793"/>
    </location>
</feature>
<feature type="domain" description="BRCT 2" evidence="5">
    <location>
        <begin position="857"/>
        <end position="956"/>
    </location>
</feature>
<feature type="region of interest" description="Disordered" evidence="6">
    <location>
        <begin position="666"/>
        <end position="700"/>
    </location>
</feature>
<feature type="active site" description="N6-AMP-lysine intermediate" evidence="1">
    <location>
        <position position="309"/>
    </location>
</feature>
<feature type="binding site" evidence="2">
    <location>
        <position position="307"/>
    </location>
    <ligand>
        <name>ATP</name>
        <dbReference type="ChEBI" id="CHEBI:30616"/>
    </ligand>
</feature>
<feature type="binding site" evidence="2">
    <location>
        <position position="309"/>
    </location>
    <ligand>
        <name>ATP</name>
        <dbReference type="ChEBI" id="CHEBI:30616"/>
    </ligand>
</feature>
<feature type="binding site" evidence="2">
    <location>
        <position position="310"/>
    </location>
    <ligand>
        <name>ATP</name>
        <dbReference type="ChEBI" id="CHEBI:30616"/>
    </ligand>
</feature>
<feature type="binding site" evidence="2">
    <location>
        <position position="314"/>
    </location>
    <ligand>
        <name>ATP</name>
        <dbReference type="ChEBI" id="CHEBI:30616"/>
    </ligand>
</feature>
<feature type="binding site" evidence="2">
    <location>
        <position position="371"/>
    </location>
    <ligand>
        <name>ATP</name>
        <dbReference type="ChEBI" id="CHEBI:30616"/>
    </ligand>
</feature>
<feature type="binding site" evidence="4">
    <location>
        <position position="371"/>
    </location>
    <ligand>
        <name>Mg(2+)</name>
        <dbReference type="ChEBI" id="CHEBI:18420"/>
        <label>1</label>
    </ligand>
</feature>
<feature type="binding site" evidence="2">
    <location>
        <position position="409"/>
    </location>
    <ligand>
        <name>ATP</name>
        <dbReference type="ChEBI" id="CHEBI:30616"/>
    </ligand>
</feature>
<feature type="binding site" evidence="2">
    <location>
        <position position="476"/>
    </location>
    <ligand>
        <name>ATP</name>
        <dbReference type="ChEBI" id="CHEBI:30616"/>
    </ligand>
</feature>
<feature type="binding site" evidence="4">
    <location>
        <position position="476"/>
    </location>
    <ligand>
        <name>Mg(2+)</name>
        <dbReference type="ChEBI" id="CHEBI:18420"/>
        <label>2</label>
    </ligand>
</feature>
<feature type="binding site" evidence="2">
    <location>
        <position position="481"/>
    </location>
    <ligand>
        <name>ATP</name>
        <dbReference type="ChEBI" id="CHEBI:30616"/>
    </ligand>
</feature>
<feature type="binding site" evidence="2">
    <location>
        <position position="498"/>
    </location>
    <ligand>
        <name>ATP</name>
        <dbReference type="ChEBI" id="CHEBI:30616"/>
    </ligand>
</feature>
<feature type="binding site" evidence="2">
    <location>
        <position position="500"/>
    </location>
    <ligand>
        <name>ATP</name>
        <dbReference type="ChEBI" id="CHEBI:30616"/>
    </ligand>
</feature>
<sequence length="956" mass="108061">MSSERRPELEETAVDPATGSAASRKFSIVQDAVETTIVAPTNHGPSPRFSTLVRNLFEPLVNLSAVVAALRKKPTEAKAHIASQFIKGWVEEVGKDIYPAFRLILPDKDRERAVYGLKEKALGRLWVKVLNLAKDSPDAKALSEWKQGGNESAGNFSKRCYEVLSKRTSLTDYGHMTVDEVNERLDLLADGETDQAKQIEILTYFYKHMNATELKWLVNIILRQMKMNATEKVFFEPWHPDAESLFNVTASLKRVCWELTDPTKRLTSAEAQVSLFACFMPQIAAFPKYSGQDIAGKHFKGRPFYIEEKIDGERMQMHMSEYGNKFHWWSRRSKDFTETYGNSLDDASGSLTKRLRGIINPKVRNCVLDGEMVAYDPATKKIIPFGTLRTANRNEQNDLNLTKPMFMVFDILLLNDKPLVDYTLAERKRTLRTIFARTDNETVGQEGVLEVLPYTEATTAAEIETCMRKIIAESSEGLVIKDPTSVYRVNTRDDSWLKMKPEYMSEFGEKLDVVIIGGYYGSGKRGSILSSYLCGLRADGSDQFWSFFKVGGGLTAGDYQAIRTKTEGKWKRWDKNDKPKNVLLAGPNGDLERPDVWIEPSDSVVVEVKAASVVASDQYKVGLCLRFPRFRALRLDKTWEDGLTISQFAELRQTVEMEAENKELELEDRKRRNAGPGRGAKRLKLANVSSDEDELGTDERPTSVFKATSFAVLSDMSSPRYMSKAAVENLIKKHGGTVFQTVEGPHTIPVADTRTIKVQALTKRVHGVDVIRPNWLLDCINEEKLVALEPRNLLESSAETLALAKTNVDEFGDSYTRPLTYKEMQEVLRFMDQFDLDQTNPPDLMMEVLETNDGAVPKGMLFYGKKVYMSTSNMDTVALETQFRAYDALRCLQFGGANLVTDMKDLVVAVAKTEEEAKELRRVSSEQVFPFRVVSIKWVEESWKNGTVEIEDDYPL</sequence>